<evidence type="ECO:0000255" key="1">
    <source>
        <dbReference type="HAMAP-Rule" id="MF_00003"/>
    </source>
</evidence>
<protein>
    <recommendedName>
        <fullName evidence="1">Ribosome-binding factor A</fullName>
    </recommendedName>
</protein>
<proteinExistence type="inferred from homology"/>
<feature type="chain" id="PRO_0000102675" description="Ribosome-binding factor A">
    <location>
        <begin position="1"/>
        <end position="121"/>
    </location>
</feature>
<reference key="1">
    <citation type="journal article" date="2005" name="Proc. Natl. Acad. Sci. U.S.A.">
        <title>Complete genome sequence of the probiotic lactic acid bacterium Lactobacillus acidophilus NCFM.</title>
        <authorList>
            <person name="Altermann E."/>
            <person name="Russell W.M."/>
            <person name="Azcarate-Peril M.A."/>
            <person name="Barrangou R."/>
            <person name="Buck B.L."/>
            <person name="McAuliffe O."/>
            <person name="Souther N."/>
            <person name="Dobson A."/>
            <person name="Duong T."/>
            <person name="Callanan M."/>
            <person name="Lick S."/>
            <person name="Hamrick A."/>
            <person name="Cano R."/>
            <person name="Klaenhammer T.R."/>
        </authorList>
    </citation>
    <scope>NUCLEOTIDE SEQUENCE [LARGE SCALE GENOMIC DNA]</scope>
    <source>
        <strain>ATCC 700396 / NCK56 / N2 / NCFM</strain>
    </source>
</reference>
<gene>
    <name evidence="1" type="primary">rbfA</name>
    <name type="ordered locus">LBA1254</name>
</gene>
<accession>Q5FJN7</accession>
<keyword id="KW-0963">Cytoplasm</keyword>
<keyword id="KW-1185">Reference proteome</keyword>
<keyword id="KW-0690">Ribosome biogenesis</keyword>
<sequence length="121" mass="13954">MKHRVGRVEGEILRELTKILRKDIRDPRLSEVTITAVECTNDLSYATIYYSLLTEDAEKEKEVQEGLDKAKGMMRHLLGQTLTVYKVPELIFKRDNSVKYGSKIDRLIAEVKKQDAERASK</sequence>
<comment type="function">
    <text evidence="1">One of several proteins that assist in the late maturation steps of the functional core of the 30S ribosomal subunit. Associates with free 30S ribosomal subunits (but not with 30S subunits that are part of 70S ribosomes or polysomes). Required for efficient processing of 16S rRNA. May interact with the 5'-terminal helix region of 16S rRNA.</text>
</comment>
<comment type="subunit">
    <text evidence="1">Monomer. Binds 30S ribosomal subunits, but not 50S ribosomal subunits or 70S ribosomes.</text>
</comment>
<comment type="subcellular location">
    <subcellularLocation>
        <location evidence="1">Cytoplasm</location>
    </subcellularLocation>
</comment>
<comment type="similarity">
    <text evidence="1">Belongs to the RbfA family.</text>
</comment>
<dbReference type="EMBL" id="CP000033">
    <property type="protein sequence ID" value="AAV43087.1"/>
    <property type="molecule type" value="Genomic_DNA"/>
</dbReference>
<dbReference type="RefSeq" id="WP_003547807.1">
    <property type="nucleotide sequence ID" value="NC_006814.3"/>
</dbReference>
<dbReference type="RefSeq" id="YP_194118.1">
    <property type="nucleotide sequence ID" value="NC_006814.3"/>
</dbReference>
<dbReference type="SMR" id="Q5FJN7"/>
<dbReference type="STRING" id="272621.LBA1254"/>
<dbReference type="KEGG" id="lac:LBA1254"/>
<dbReference type="PATRIC" id="fig|272621.13.peg.1189"/>
<dbReference type="eggNOG" id="COG0858">
    <property type="taxonomic scope" value="Bacteria"/>
</dbReference>
<dbReference type="HOGENOM" id="CLU_089475_3_0_9"/>
<dbReference type="OrthoDB" id="307788at2"/>
<dbReference type="BioCyc" id="LACI272621:G1G49-1237-MONOMER"/>
<dbReference type="Proteomes" id="UP000006381">
    <property type="component" value="Chromosome"/>
</dbReference>
<dbReference type="GO" id="GO:0005829">
    <property type="term" value="C:cytosol"/>
    <property type="evidence" value="ECO:0007669"/>
    <property type="project" value="TreeGrafter"/>
</dbReference>
<dbReference type="GO" id="GO:0043024">
    <property type="term" value="F:ribosomal small subunit binding"/>
    <property type="evidence" value="ECO:0007669"/>
    <property type="project" value="TreeGrafter"/>
</dbReference>
<dbReference type="GO" id="GO:0030490">
    <property type="term" value="P:maturation of SSU-rRNA"/>
    <property type="evidence" value="ECO:0007669"/>
    <property type="project" value="UniProtKB-UniRule"/>
</dbReference>
<dbReference type="Gene3D" id="3.30.300.20">
    <property type="match status" value="1"/>
</dbReference>
<dbReference type="HAMAP" id="MF_00003">
    <property type="entry name" value="RbfA"/>
    <property type="match status" value="1"/>
</dbReference>
<dbReference type="InterPro" id="IPR015946">
    <property type="entry name" value="KH_dom-like_a/b"/>
</dbReference>
<dbReference type="InterPro" id="IPR000238">
    <property type="entry name" value="RbfA"/>
</dbReference>
<dbReference type="InterPro" id="IPR023799">
    <property type="entry name" value="RbfA_dom_sf"/>
</dbReference>
<dbReference type="InterPro" id="IPR020053">
    <property type="entry name" value="Ribosome-bd_factorA_CS"/>
</dbReference>
<dbReference type="NCBIfam" id="NF010391">
    <property type="entry name" value="PRK13818.1"/>
    <property type="match status" value="1"/>
</dbReference>
<dbReference type="NCBIfam" id="TIGR00082">
    <property type="entry name" value="rbfA"/>
    <property type="match status" value="1"/>
</dbReference>
<dbReference type="PANTHER" id="PTHR33515">
    <property type="entry name" value="RIBOSOME-BINDING FACTOR A, CHLOROPLASTIC-RELATED"/>
    <property type="match status" value="1"/>
</dbReference>
<dbReference type="PANTHER" id="PTHR33515:SF1">
    <property type="entry name" value="RIBOSOME-BINDING FACTOR A, CHLOROPLASTIC-RELATED"/>
    <property type="match status" value="1"/>
</dbReference>
<dbReference type="Pfam" id="PF02033">
    <property type="entry name" value="RBFA"/>
    <property type="match status" value="1"/>
</dbReference>
<dbReference type="SUPFAM" id="SSF89919">
    <property type="entry name" value="Ribosome-binding factor A, RbfA"/>
    <property type="match status" value="1"/>
</dbReference>
<dbReference type="PROSITE" id="PS01319">
    <property type="entry name" value="RBFA"/>
    <property type="match status" value="1"/>
</dbReference>
<organism>
    <name type="scientific">Lactobacillus acidophilus (strain ATCC 700396 / NCK56 / N2 / NCFM)</name>
    <dbReference type="NCBI Taxonomy" id="272621"/>
    <lineage>
        <taxon>Bacteria</taxon>
        <taxon>Bacillati</taxon>
        <taxon>Bacillota</taxon>
        <taxon>Bacilli</taxon>
        <taxon>Lactobacillales</taxon>
        <taxon>Lactobacillaceae</taxon>
        <taxon>Lactobacillus</taxon>
    </lineage>
</organism>
<name>RBFA_LACAC</name>